<gene>
    <name evidence="1" type="primary">pepB</name>
    <name type="ordered locus">SNSL254_A2735</name>
</gene>
<protein>
    <recommendedName>
        <fullName evidence="1">Peptidase B</fullName>
        <ecNumber evidence="1">3.4.11.23</ecNumber>
    </recommendedName>
    <alternativeName>
        <fullName evidence="1">Aminopeptidase B</fullName>
    </alternativeName>
</protein>
<keyword id="KW-0031">Aminopeptidase</keyword>
<keyword id="KW-0963">Cytoplasm</keyword>
<keyword id="KW-0378">Hydrolase</keyword>
<keyword id="KW-0464">Manganese</keyword>
<keyword id="KW-0479">Metal-binding</keyword>
<keyword id="KW-0645">Protease</keyword>
<accession>B4T0R5</accession>
<evidence type="ECO:0000255" key="1">
    <source>
        <dbReference type="HAMAP-Rule" id="MF_00504"/>
    </source>
</evidence>
<sequence>MTEAMKITLSTQPADARWGDKATYSINNDGITLHLNGKDDLGLIQRAARKIDGLGIKQVALTGEGWDTERCWAFWAGYKGPKGVRTVMWPDLDDAQRQELDNRLTIIDWVRDTINAPAEELGPEQLAQRAVDLLCSVACDSVTYRITKGEDLREQNYMGLHTVGRGSERPPVLLALDYNPTGDKDAPVYACLVGKGITFDSGGYSIKQSAFMDSMKSDMGGAATVTGALAFAITRGLNKRVKLFLCCADNLISGNAFKLGDIIRYRNGKNVEVMNTDAEGRLVLADGLIDASAQHPQLIIDMATLTGAAKTALGNDYHALFSFDDTLAGRLLTSAAQENEPFWRLPLAEFHRNQLPSNFAELNNTGSAAYPAGASTAAGFLSHFVENYREGWLHIDCSATYRKAPVEQWAAGATGLGVRTIANLLTA</sequence>
<organism>
    <name type="scientific">Salmonella newport (strain SL254)</name>
    <dbReference type="NCBI Taxonomy" id="423368"/>
    <lineage>
        <taxon>Bacteria</taxon>
        <taxon>Pseudomonadati</taxon>
        <taxon>Pseudomonadota</taxon>
        <taxon>Gammaproteobacteria</taxon>
        <taxon>Enterobacterales</taxon>
        <taxon>Enterobacteriaceae</taxon>
        <taxon>Salmonella</taxon>
    </lineage>
</organism>
<name>PEPB_SALNS</name>
<proteinExistence type="inferred from homology"/>
<feature type="chain" id="PRO_1000127016" description="Peptidase B">
    <location>
        <begin position="1"/>
        <end position="427"/>
    </location>
</feature>
<feature type="active site" evidence="1">
    <location>
        <position position="207"/>
    </location>
</feature>
<feature type="active site" evidence="1">
    <location>
        <position position="281"/>
    </location>
</feature>
<feature type="binding site" evidence="1">
    <location>
        <position position="195"/>
    </location>
    <ligand>
        <name>Mn(2+)</name>
        <dbReference type="ChEBI" id="CHEBI:29035"/>
        <label>2</label>
    </ligand>
</feature>
<feature type="binding site" evidence="1">
    <location>
        <position position="200"/>
    </location>
    <ligand>
        <name>Mn(2+)</name>
        <dbReference type="ChEBI" id="CHEBI:29035"/>
        <label>1</label>
    </ligand>
</feature>
<feature type="binding site" evidence="1">
    <location>
        <position position="200"/>
    </location>
    <ligand>
        <name>Mn(2+)</name>
        <dbReference type="ChEBI" id="CHEBI:29035"/>
        <label>2</label>
    </ligand>
</feature>
<feature type="binding site" evidence="1">
    <location>
        <position position="218"/>
    </location>
    <ligand>
        <name>Mn(2+)</name>
        <dbReference type="ChEBI" id="CHEBI:29035"/>
        <label>2</label>
    </ligand>
</feature>
<feature type="binding site" evidence="1">
    <location>
        <position position="277"/>
    </location>
    <ligand>
        <name>Mn(2+)</name>
        <dbReference type="ChEBI" id="CHEBI:29035"/>
        <label>1</label>
    </ligand>
</feature>
<feature type="binding site" evidence="1">
    <location>
        <position position="279"/>
    </location>
    <ligand>
        <name>Mn(2+)</name>
        <dbReference type="ChEBI" id="CHEBI:29035"/>
        <label>1</label>
    </ligand>
</feature>
<feature type="binding site" evidence="1">
    <location>
        <position position="279"/>
    </location>
    <ligand>
        <name>Mn(2+)</name>
        <dbReference type="ChEBI" id="CHEBI:29035"/>
        <label>2</label>
    </ligand>
</feature>
<dbReference type="EC" id="3.4.11.23" evidence="1"/>
<dbReference type="EMBL" id="CP001113">
    <property type="protein sequence ID" value="ACF63909.1"/>
    <property type="molecule type" value="Genomic_DNA"/>
</dbReference>
<dbReference type="RefSeq" id="WP_000133541.1">
    <property type="nucleotide sequence ID" value="NZ_CCMR01000001.1"/>
</dbReference>
<dbReference type="SMR" id="B4T0R5"/>
<dbReference type="MEROPS" id="M17.004"/>
<dbReference type="KEGG" id="see:SNSL254_A2735"/>
<dbReference type="HOGENOM" id="CLU_013734_7_1_6"/>
<dbReference type="Proteomes" id="UP000008824">
    <property type="component" value="Chromosome"/>
</dbReference>
<dbReference type="GO" id="GO:0005737">
    <property type="term" value="C:cytoplasm"/>
    <property type="evidence" value="ECO:0007669"/>
    <property type="project" value="UniProtKB-SubCell"/>
</dbReference>
<dbReference type="GO" id="GO:0030145">
    <property type="term" value="F:manganese ion binding"/>
    <property type="evidence" value="ECO:0007669"/>
    <property type="project" value="UniProtKB-UniRule"/>
</dbReference>
<dbReference type="GO" id="GO:0070006">
    <property type="term" value="F:metalloaminopeptidase activity"/>
    <property type="evidence" value="ECO:0007669"/>
    <property type="project" value="InterPro"/>
</dbReference>
<dbReference type="GO" id="GO:0006508">
    <property type="term" value="P:proteolysis"/>
    <property type="evidence" value="ECO:0007669"/>
    <property type="project" value="UniProtKB-UniRule"/>
</dbReference>
<dbReference type="CDD" id="cd00433">
    <property type="entry name" value="Peptidase_M17"/>
    <property type="match status" value="1"/>
</dbReference>
<dbReference type="FunFam" id="3.40.630.10:FF:000037">
    <property type="entry name" value="Peptidase B"/>
    <property type="match status" value="1"/>
</dbReference>
<dbReference type="Gene3D" id="3.40.630.10">
    <property type="entry name" value="Zn peptidases"/>
    <property type="match status" value="1"/>
</dbReference>
<dbReference type="HAMAP" id="MF_00504">
    <property type="entry name" value="Aminopeptidase_M17"/>
    <property type="match status" value="1"/>
</dbReference>
<dbReference type="InterPro" id="IPR011356">
    <property type="entry name" value="Leucine_aapep/pepB"/>
</dbReference>
<dbReference type="InterPro" id="IPR047620">
    <property type="entry name" value="M17_PepB-like_N"/>
</dbReference>
<dbReference type="InterPro" id="IPR008330">
    <property type="entry name" value="Pept_M17_PepB"/>
</dbReference>
<dbReference type="InterPro" id="IPR000819">
    <property type="entry name" value="Peptidase_M17_C"/>
</dbReference>
<dbReference type="NCBIfam" id="NF003450">
    <property type="entry name" value="PRK05015.1"/>
    <property type="match status" value="1"/>
</dbReference>
<dbReference type="PANTHER" id="PTHR11963">
    <property type="entry name" value="LEUCINE AMINOPEPTIDASE-RELATED"/>
    <property type="match status" value="1"/>
</dbReference>
<dbReference type="PANTHER" id="PTHR11963:SF20">
    <property type="entry name" value="PEPTIDASE B"/>
    <property type="match status" value="1"/>
</dbReference>
<dbReference type="Pfam" id="PF12404">
    <property type="entry name" value="DUF3663"/>
    <property type="match status" value="1"/>
</dbReference>
<dbReference type="Pfam" id="PF00883">
    <property type="entry name" value="Peptidase_M17"/>
    <property type="match status" value="1"/>
</dbReference>
<dbReference type="PIRSF" id="PIRSF036388">
    <property type="entry name" value="Ctsl_amnpptdse_B"/>
    <property type="match status" value="1"/>
</dbReference>
<dbReference type="PRINTS" id="PR00481">
    <property type="entry name" value="LAMNOPPTDASE"/>
</dbReference>
<dbReference type="SUPFAM" id="SSF53187">
    <property type="entry name" value="Zn-dependent exopeptidases"/>
    <property type="match status" value="1"/>
</dbReference>
<dbReference type="PROSITE" id="PS00631">
    <property type="entry name" value="CYTOSOL_AP"/>
    <property type="match status" value="1"/>
</dbReference>
<comment type="function">
    <text evidence="1">Probably plays an important role in intracellular peptide degradation.</text>
</comment>
<comment type="catalytic activity">
    <reaction evidence="1">
        <text>Release of an N-terminal amino acid, Xaa, from a peptide or arylamide. Xaa is preferably Glu or Asp but may be other amino acids, including Leu, Met, His, Cys and Gln.</text>
        <dbReference type="EC" id="3.4.11.23"/>
    </reaction>
</comment>
<comment type="cofactor">
    <cofactor evidence="1">
        <name>Mn(2+)</name>
        <dbReference type="ChEBI" id="CHEBI:29035"/>
    </cofactor>
    <text evidence="1">Binds 2 manganese ions per subunit.</text>
</comment>
<comment type="subunit">
    <text evidence="1">Homohexamer.</text>
</comment>
<comment type="subcellular location">
    <subcellularLocation>
        <location evidence="1">Cytoplasm</location>
    </subcellularLocation>
</comment>
<comment type="similarity">
    <text evidence="1">Belongs to the peptidase M17 family.</text>
</comment>
<reference key="1">
    <citation type="journal article" date="2011" name="J. Bacteriol.">
        <title>Comparative genomics of 28 Salmonella enterica isolates: evidence for CRISPR-mediated adaptive sublineage evolution.</title>
        <authorList>
            <person name="Fricke W.F."/>
            <person name="Mammel M.K."/>
            <person name="McDermott P.F."/>
            <person name="Tartera C."/>
            <person name="White D.G."/>
            <person name="Leclerc J.E."/>
            <person name="Ravel J."/>
            <person name="Cebula T.A."/>
        </authorList>
    </citation>
    <scope>NUCLEOTIDE SEQUENCE [LARGE SCALE GENOMIC DNA]</scope>
    <source>
        <strain>SL254</strain>
    </source>
</reference>